<name>RS19_CLOB8</name>
<comment type="function">
    <text evidence="1">Protein S19 forms a complex with S13 that binds strongly to the 16S ribosomal RNA.</text>
</comment>
<comment type="similarity">
    <text evidence="1">Belongs to the universal ribosomal protein uS19 family.</text>
</comment>
<sequence>MSRSTKKAPFVHEGLFKKIEEMNGNGEKKVVKTWSRSSTIFPQFIGHTIAVHDGRKHVPVYVSEDMVGHKLGEFVLTRTYKGHDDKTSKR</sequence>
<feature type="chain" id="PRO_1000081763" description="Small ribosomal subunit protein uS19">
    <location>
        <begin position="1"/>
        <end position="90"/>
    </location>
</feature>
<evidence type="ECO:0000255" key="1">
    <source>
        <dbReference type="HAMAP-Rule" id="MF_00531"/>
    </source>
</evidence>
<evidence type="ECO:0000305" key="2"/>
<reference key="1">
    <citation type="submission" date="2007-06" db="EMBL/GenBank/DDBJ databases">
        <title>Complete sequence of Clostridium beijerinckii NCIMB 8052.</title>
        <authorList>
            <consortium name="US DOE Joint Genome Institute"/>
            <person name="Copeland A."/>
            <person name="Lucas S."/>
            <person name="Lapidus A."/>
            <person name="Barry K."/>
            <person name="Detter J.C."/>
            <person name="Glavina del Rio T."/>
            <person name="Hammon N."/>
            <person name="Israni S."/>
            <person name="Dalin E."/>
            <person name="Tice H."/>
            <person name="Pitluck S."/>
            <person name="Sims D."/>
            <person name="Brettin T."/>
            <person name="Bruce D."/>
            <person name="Tapia R."/>
            <person name="Brainard J."/>
            <person name="Schmutz J."/>
            <person name="Larimer F."/>
            <person name="Land M."/>
            <person name="Hauser L."/>
            <person name="Kyrpides N."/>
            <person name="Mikhailova N."/>
            <person name="Bennet G."/>
            <person name="Cann I."/>
            <person name="Chen J.-S."/>
            <person name="Contreras A.L."/>
            <person name="Jones D."/>
            <person name="Kashket E."/>
            <person name="Mitchell W."/>
            <person name="Stoddard S."/>
            <person name="Schwarz W."/>
            <person name="Qureshi N."/>
            <person name="Young M."/>
            <person name="Shi Z."/>
            <person name="Ezeji T."/>
            <person name="White B."/>
            <person name="Blaschek H."/>
            <person name="Richardson P."/>
        </authorList>
    </citation>
    <scope>NUCLEOTIDE SEQUENCE [LARGE SCALE GENOMIC DNA]</scope>
    <source>
        <strain>ATCC 51743 / NCIMB 8052</strain>
    </source>
</reference>
<gene>
    <name evidence="1" type="primary">rpsS</name>
    <name type="ordered locus">Cbei_0155</name>
</gene>
<accession>A6LPR5</accession>
<dbReference type="EMBL" id="CP000721">
    <property type="protein sequence ID" value="ABR32345.1"/>
    <property type="molecule type" value="Genomic_DNA"/>
</dbReference>
<dbReference type="RefSeq" id="WP_011967515.1">
    <property type="nucleotide sequence ID" value="NC_009617.1"/>
</dbReference>
<dbReference type="SMR" id="A6LPR5"/>
<dbReference type="KEGG" id="cbe:Cbei_0155"/>
<dbReference type="eggNOG" id="COG0185">
    <property type="taxonomic scope" value="Bacteria"/>
</dbReference>
<dbReference type="HOGENOM" id="CLU_144911_0_1_9"/>
<dbReference type="Proteomes" id="UP000000565">
    <property type="component" value="Chromosome"/>
</dbReference>
<dbReference type="GO" id="GO:0005737">
    <property type="term" value="C:cytoplasm"/>
    <property type="evidence" value="ECO:0007669"/>
    <property type="project" value="UniProtKB-ARBA"/>
</dbReference>
<dbReference type="GO" id="GO:0015935">
    <property type="term" value="C:small ribosomal subunit"/>
    <property type="evidence" value="ECO:0007669"/>
    <property type="project" value="InterPro"/>
</dbReference>
<dbReference type="GO" id="GO:0019843">
    <property type="term" value="F:rRNA binding"/>
    <property type="evidence" value="ECO:0007669"/>
    <property type="project" value="UniProtKB-UniRule"/>
</dbReference>
<dbReference type="GO" id="GO:0003735">
    <property type="term" value="F:structural constituent of ribosome"/>
    <property type="evidence" value="ECO:0007669"/>
    <property type="project" value="InterPro"/>
</dbReference>
<dbReference type="GO" id="GO:0000028">
    <property type="term" value="P:ribosomal small subunit assembly"/>
    <property type="evidence" value="ECO:0007669"/>
    <property type="project" value="TreeGrafter"/>
</dbReference>
<dbReference type="GO" id="GO:0006412">
    <property type="term" value="P:translation"/>
    <property type="evidence" value="ECO:0007669"/>
    <property type="project" value="UniProtKB-UniRule"/>
</dbReference>
<dbReference type="FunFam" id="3.30.860.10:FF:000001">
    <property type="entry name" value="30S ribosomal protein S19"/>
    <property type="match status" value="1"/>
</dbReference>
<dbReference type="Gene3D" id="3.30.860.10">
    <property type="entry name" value="30s Ribosomal Protein S19, Chain A"/>
    <property type="match status" value="1"/>
</dbReference>
<dbReference type="HAMAP" id="MF_00531">
    <property type="entry name" value="Ribosomal_uS19"/>
    <property type="match status" value="1"/>
</dbReference>
<dbReference type="InterPro" id="IPR002222">
    <property type="entry name" value="Ribosomal_uS19"/>
</dbReference>
<dbReference type="InterPro" id="IPR005732">
    <property type="entry name" value="Ribosomal_uS19_bac-type"/>
</dbReference>
<dbReference type="InterPro" id="IPR020934">
    <property type="entry name" value="Ribosomal_uS19_CS"/>
</dbReference>
<dbReference type="InterPro" id="IPR023575">
    <property type="entry name" value="Ribosomal_uS19_SF"/>
</dbReference>
<dbReference type="NCBIfam" id="TIGR01050">
    <property type="entry name" value="rpsS_bact"/>
    <property type="match status" value="1"/>
</dbReference>
<dbReference type="PANTHER" id="PTHR11880">
    <property type="entry name" value="RIBOSOMAL PROTEIN S19P FAMILY MEMBER"/>
    <property type="match status" value="1"/>
</dbReference>
<dbReference type="PANTHER" id="PTHR11880:SF8">
    <property type="entry name" value="SMALL RIBOSOMAL SUBUNIT PROTEIN US19M"/>
    <property type="match status" value="1"/>
</dbReference>
<dbReference type="Pfam" id="PF00203">
    <property type="entry name" value="Ribosomal_S19"/>
    <property type="match status" value="1"/>
</dbReference>
<dbReference type="PIRSF" id="PIRSF002144">
    <property type="entry name" value="Ribosomal_S19"/>
    <property type="match status" value="1"/>
</dbReference>
<dbReference type="PRINTS" id="PR00975">
    <property type="entry name" value="RIBOSOMALS19"/>
</dbReference>
<dbReference type="SUPFAM" id="SSF54570">
    <property type="entry name" value="Ribosomal protein S19"/>
    <property type="match status" value="1"/>
</dbReference>
<dbReference type="PROSITE" id="PS00323">
    <property type="entry name" value="RIBOSOMAL_S19"/>
    <property type="match status" value="1"/>
</dbReference>
<organism>
    <name type="scientific">Clostridium beijerinckii (strain ATCC 51743 / NCIMB 8052)</name>
    <name type="common">Clostridium acetobutylicum</name>
    <dbReference type="NCBI Taxonomy" id="290402"/>
    <lineage>
        <taxon>Bacteria</taxon>
        <taxon>Bacillati</taxon>
        <taxon>Bacillota</taxon>
        <taxon>Clostridia</taxon>
        <taxon>Eubacteriales</taxon>
        <taxon>Clostridiaceae</taxon>
        <taxon>Clostridium</taxon>
    </lineage>
</organism>
<keyword id="KW-0687">Ribonucleoprotein</keyword>
<keyword id="KW-0689">Ribosomal protein</keyword>
<keyword id="KW-0694">RNA-binding</keyword>
<keyword id="KW-0699">rRNA-binding</keyword>
<protein>
    <recommendedName>
        <fullName evidence="1">Small ribosomal subunit protein uS19</fullName>
    </recommendedName>
    <alternativeName>
        <fullName evidence="2">30S ribosomal protein S19</fullName>
    </alternativeName>
</protein>
<proteinExistence type="inferred from homology"/>